<accession>Q9ZSB1</accession>
<sequence>MSKTIILLAFFLSIVLNVQISFVVAESKVYVVYLGEKEHDNPESVTESHHQMLWSLLGSKEAVLDSIVYSYRHGFSGFAAKLTESQAQQISELPEVVQVIPNTLYEMTTTRTWDYLGVSPGNSDSLLQKANMGYNVIVGVIDTGVWPESEMFNDKGYGPIPSRWKGGCESGELFNGSIHCNRKLIGAKYFIDANNAQFGVLNKTENPDYLSPRDFNGHGTHVASTIGGSFLPNVSYLGLGRGTARGGAPGVHIAVYKACWVQRGCSGADVLKAMDEAIHDGVDILSLSLQTSVPLFPETDARELTSVGAFHAVAKGIPVVAAASNAGPTAQTLSNVAPWVLTVAATTQDRSFPTAITLGNNITILGQAIFGGSELGFVGLTYPESPLSGDCEKLSANPKSAMEGKVVLCFAASTPSNAAITAVINAGGLGLIMARNPTHLLRPLRNFPYVSVDFELGTDILFYIRSTRSPIVNIQASRTLFGQSVSTKVATFSSRGPNSVSPAILKPDIAAPGVNILAAISPNSINDGGFAMMSGTSMATPVVSGVVVLLKSLHPDWSPSAIKSAIVTTAWRTDPSGEPIFADGSSRKLADPFDYGGGLINPEKAVKPGLIYDMTTDDYVMYMCSVDYSDISISRVLGKITVCPNPKPSVLDLNLPSITIPNLRGEVTLTRTVTNVGPVNSVYKVVIDPPTGVNVAVTPTELVFDSTTTKRSFTVRVSTTHKVNTGYYFGSLTWTDTLHNVAIPVSVRTQILQRYYDEN</sequence>
<name>SBT3A_ARATH</name>
<gene>
    <name evidence="7" type="primary">SBT3.10</name>
    <name evidence="9" type="ordered locus">At4g10530</name>
    <name evidence="10" type="ORF">F3H7.13</name>
    <name evidence="11" type="ORF">F7L13.110</name>
</gene>
<organism>
    <name type="scientific">Arabidopsis thaliana</name>
    <name type="common">Mouse-ear cress</name>
    <dbReference type="NCBI Taxonomy" id="3702"/>
    <lineage>
        <taxon>Eukaryota</taxon>
        <taxon>Viridiplantae</taxon>
        <taxon>Streptophyta</taxon>
        <taxon>Embryophyta</taxon>
        <taxon>Tracheophyta</taxon>
        <taxon>Spermatophyta</taxon>
        <taxon>Magnoliopsida</taxon>
        <taxon>eudicotyledons</taxon>
        <taxon>Gunneridae</taxon>
        <taxon>Pentapetalae</taxon>
        <taxon>rosids</taxon>
        <taxon>malvids</taxon>
        <taxon>Brassicales</taxon>
        <taxon>Brassicaceae</taxon>
        <taxon>Camelineae</taxon>
        <taxon>Arabidopsis</taxon>
    </lineage>
</organism>
<dbReference type="EC" id="3.4.21.-" evidence="6"/>
<dbReference type="EMBL" id="AF118222">
    <property type="protein sequence ID" value="AAD03437.1"/>
    <property type="status" value="ALT_FRAME"/>
    <property type="molecule type" value="Genomic_DNA"/>
</dbReference>
<dbReference type="EMBL" id="AL049524">
    <property type="protein sequence ID" value="CAB40046.1"/>
    <property type="status" value="ALT_FRAME"/>
    <property type="molecule type" value="Genomic_DNA"/>
</dbReference>
<dbReference type="EMBL" id="AL161517">
    <property type="protein sequence ID" value="CAB78176.1"/>
    <property type="status" value="ALT_FRAME"/>
    <property type="molecule type" value="Genomic_DNA"/>
</dbReference>
<dbReference type="EMBL" id="CP002687">
    <property type="protein sequence ID" value="AEE82894.1"/>
    <property type="status" value="ALT_FRAME"/>
    <property type="molecule type" value="Genomic_DNA"/>
</dbReference>
<dbReference type="PIR" id="T04188">
    <property type="entry name" value="T04188"/>
</dbReference>
<dbReference type="RefSeq" id="NP_567360.1">
    <property type="nucleotide sequence ID" value="NM_117121.1"/>
</dbReference>
<dbReference type="SMR" id="Q9ZSB1"/>
<dbReference type="FunCoup" id="Q9ZSB1">
    <property type="interactions" value="11"/>
</dbReference>
<dbReference type="MEROPS" id="S08.A38"/>
<dbReference type="GlyCosmos" id="Q9ZSB1">
    <property type="glycosylation" value="4 sites, No reported glycans"/>
</dbReference>
<dbReference type="GlyGen" id="Q9ZSB1">
    <property type="glycosylation" value="6 sites"/>
</dbReference>
<dbReference type="PaxDb" id="3702-AT4G10530.1"/>
<dbReference type="GeneID" id="826645"/>
<dbReference type="KEGG" id="ath:AT4G10530"/>
<dbReference type="Araport" id="AT4G10530"/>
<dbReference type="TAIR" id="AT4G10530"/>
<dbReference type="eggNOG" id="ENOG502QSF0">
    <property type="taxonomic scope" value="Eukaryota"/>
</dbReference>
<dbReference type="HOGENOM" id="CLU_000625_4_2_1"/>
<dbReference type="InParanoid" id="Q9ZSB1"/>
<dbReference type="PRO" id="PR:Q9ZSB1"/>
<dbReference type="Proteomes" id="UP000006548">
    <property type="component" value="Chromosome 4"/>
</dbReference>
<dbReference type="ExpressionAtlas" id="Q9ZSB1">
    <property type="expression patterns" value="baseline and differential"/>
</dbReference>
<dbReference type="GO" id="GO:0005615">
    <property type="term" value="C:extracellular space"/>
    <property type="evidence" value="ECO:0000318"/>
    <property type="project" value="GO_Central"/>
</dbReference>
<dbReference type="GO" id="GO:0004252">
    <property type="term" value="F:serine-type endopeptidase activity"/>
    <property type="evidence" value="ECO:0000318"/>
    <property type="project" value="GO_Central"/>
</dbReference>
<dbReference type="GO" id="GO:0006508">
    <property type="term" value="P:proteolysis"/>
    <property type="evidence" value="ECO:0007669"/>
    <property type="project" value="UniProtKB-KW"/>
</dbReference>
<dbReference type="CDD" id="cd02120">
    <property type="entry name" value="PA_subtilisin_like"/>
    <property type="match status" value="1"/>
</dbReference>
<dbReference type="CDD" id="cd04852">
    <property type="entry name" value="Peptidases_S8_3"/>
    <property type="match status" value="1"/>
</dbReference>
<dbReference type="FunFam" id="2.60.40.2310:FF:000001">
    <property type="entry name" value="Subtilisin-like protease SBT1.5"/>
    <property type="match status" value="1"/>
</dbReference>
<dbReference type="FunFam" id="3.40.50.200:FF:000006">
    <property type="entry name" value="Subtilisin-like protease SBT1.5"/>
    <property type="match status" value="1"/>
</dbReference>
<dbReference type="FunFam" id="3.50.30.30:FF:000005">
    <property type="entry name" value="subtilisin-like protease SBT1.5"/>
    <property type="match status" value="1"/>
</dbReference>
<dbReference type="FunFam" id="3.30.70.80:FF:000002">
    <property type="entry name" value="Subtilisin-like protease SBT5.3"/>
    <property type="match status" value="1"/>
</dbReference>
<dbReference type="Gene3D" id="2.60.40.2310">
    <property type="match status" value="1"/>
</dbReference>
<dbReference type="Gene3D" id="3.50.30.30">
    <property type="match status" value="1"/>
</dbReference>
<dbReference type="Gene3D" id="3.30.70.80">
    <property type="entry name" value="Peptidase S8 propeptide/proteinase inhibitor I9"/>
    <property type="match status" value="1"/>
</dbReference>
<dbReference type="Gene3D" id="3.40.50.200">
    <property type="entry name" value="Peptidase S8/S53 domain"/>
    <property type="match status" value="1"/>
</dbReference>
<dbReference type="InterPro" id="IPR000209">
    <property type="entry name" value="Peptidase_S8/S53_dom"/>
</dbReference>
<dbReference type="InterPro" id="IPR036852">
    <property type="entry name" value="Peptidase_S8/S53_dom_sf"/>
</dbReference>
<dbReference type="InterPro" id="IPR022398">
    <property type="entry name" value="Peptidase_S8_His-AS"/>
</dbReference>
<dbReference type="InterPro" id="IPR023828">
    <property type="entry name" value="Peptidase_S8_Ser-AS"/>
</dbReference>
<dbReference type="InterPro" id="IPR015500">
    <property type="entry name" value="Peptidase_S8_subtilisin-rel"/>
</dbReference>
<dbReference type="InterPro" id="IPR034197">
    <property type="entry name" value="Peptidases_S8_3"/>
</dbReference>
<dbReference type="InterPro" id="IPR010259">
    <property type="entry name" value="S8pro/Inhibitor_I9"/>
</dbReference>
<dbReference type="InterPro" id="IPR037045">
    <property type="entry name" value="S8pro/Inhibitor_I9_sf"/>
</dbReference>
<dbReference type="InterPro" id="IPR045051">
    <property type="entry name" value="SBT"/>
</dbReference>
<dbReference type="InterPro" id="IPR041469">
    <property type="entry name" value="Subtilisin-like_FN3"/>
</dbReference>
<dbReference type="PANTHER" id="PTHR10795">
    <property type="entry name" value="PROPROTEIN CONVERTASE SUBTILISIN/KEXIN"/>
    <property type="match status" value="1"/>
</dbReference>
<dbReference type="Pfam" id="PF17766">
    <property type="entry name" value="fn3_6"/>
    <property type="match status" value="1"/>
</dbReference>
<dbReference type="Pfam" id="PF05922">
    <property type="entry name" value="Inhibitor_I9"/>
    <property type="match status" value="1"/>
</dbReference>
<dbReference type="Pfam" id="PF00082">
    <property type="entry name" value="Peptidase_S8"/>
    <property type="match status" value="1"/>
</dbReference>
<dbReference type="PRINTS" id="PR00723">
    <property type="entry name" value="SUBTILISIN"/>
</dbReference>
<dbReference type="SUPFAM" id="SSF52743">
    <property type="entry name" value="Subtilisin-like"/>
    <property type="match status" value="1"/>
</dbReference>
<dbReference type="PROSITE" id="PS51892">
    <property type="entry name" value="SUBTILASE"/>
    <property type="match status" value="1"/>
</dbReference>
<dbReference type="PROSITE" id="PS00137">
    <property type="entry name" value="SUBTILASE_HIS"/>
    <property type="match status" value="1"/>
</dbReference>
<dbReference type="PROSITE" id="PS00138">
    <property type="entry name" value="SUBTILASE_SER"/>
    <property type="match status" value="1"/>
</dbReference>
<feature type="signal peptide" evidence="3">
    <location>
        <begin position="1"/>
        <end position="25"/>
    </location>
</feature>
<feature type="propeptide" id="PRO_0000435204" description="Activation peptide" evidence="1">
    <location>
        <begin position="26"/>
        <end position="108"/>
    </location>
</feature>
<feature type="chain" id="PRO_5004338915" description="Subtilisin-like protease SBT3.10">
    <location>
        <begin position="109"/>
        <end status="unknown"/>
    </location>
</feature>
<feature type="propeptide" id="PRO_0000435205" evidence="1">
    <location>
        <begin status="unknown"/>
        <end position="759"/>
    </location>
</feature>
<feature type="domain" description="Inhibitor I9" evidence="3">
    <location>
        <begin position="29"/>
        <end position="106"/>
    </location>
</feature>
<feature type="domain" description="Peptidase S8" evidence="5">
    <location>
        <begin position="112"/>
        <end position="606"/>
    </location>
</feature>
<feature type="domain" description="PA" evidence="3">
    <location>
        <begin position="390"/>
        <end position="464"/>
    </location>
</feature>
<feature type="active site" description="Charge relay system" evidence="5">
    <location>
        <position position="142"/>
    </location>
</feature>
<feature type="active site" description="Charge relay system" evidence="5">
    <location>
        <position position="218"/>
    </location>
</feature>
<feature type="active site" description="Charge relay system" evidence="5">
    <location>
        <position position="537"/>
    </location>
</feature>
<feature type="glycosylation site" description="N-linked (GlcNAc...) asparagine" evidence="4">
    <location>
        <position position="175"/>
    </location>
</feature>
<feature type="glycosylation site" description="N-linked (GlcNAc...) asparagine" evidence="4">
    <location>
        <position position="202"/>
    </location>
</feature>
<feature type="glycosylation site" description="N-linked (GlcNAc...) asparagine" evidence="4">
    <location>
        <position position="233"/>
    </location>
</feature>
<feature type="glycosylation site" description="N-linked (GlcNAc...) asparagine" evidence="4">
    <location>
        <position position="361"/>
    </location>
</feature>
<comment type="subcellular location">
    <subcellularLocation>
        <location evidence="2">Secreted</location>
    </subcellularLocation>
</comment>
<comment type="similarity">
    <text evidence="8">Belongs to the peptidase S8 family.</text>
</comment>
<comment type="sequence caution" evidence="8">
    <conflict type="frameshift">
        <sequence resource="EMBL-CDS" id="AAD03437"/>
    </conflict>
</comment>
<comment type="sequence caution" evidence="8">
    <conflict type="frameshift">
        <sequence resource="EMBL-CDS" id="AEE82894"/>
    </conflict>
</comment>
<comment type="sequence caution" evidence="8">
    <conflict type="frameshift">
        <sequence resource="EMBL-CDS" id="CAB40046"/>
    </conflict>
</comment>
<comment type="sequence caution" evidence="8">
    <conflict type="frameshift">
        <sequence resource="EMBL-CDS" id="CAB78176"/>
    </conflict>
</comment>
<proteinExistence type="inferred from homology"/>
<reference key="1">
    <citation type="journal article" date="1999" name="Nature">
        <title>Sequence and analysis of chromosome 4 of the plant Arabidopsis thaliana.</title>
        <authorList>
            <person name="Mayer K.F.X."/>
            <person name="Schueller C."/>
            <person name="Wambutt R."/>
            <person name="Murphy G."/>
            <person name="Volckaert G."/>
            <person name="Pohl T."/>
            <person name="Duesterhoeft A."/>
            <person name="Stiekema W."/>
            <person name="Entian K.-D."/>
            <person name="Terryn N."/>
            <person name="Harris B."/>
            <person name="Ansorge W."/>
            <person name="Brandt P."/>
            <person name="Grivell L.A."/>
            <person name="Rieger M."/>
            <person name="Weichselgartner M."/>
            <person name="de Simone V."/>
            <person name="Obermaier B."/>
            <person name="Mache R."/>
            <person name="Mueller M."/>
            <person name="Kreis M."/>
            <person name="Delseny M."/>
            <person name="Puigdomenech P."/>
            <person name="Watson M."/>
            <person name="Schmidtheini T."/>
            <person name="Reichert B."/>
            <person name="Portetelle D."/>
            <person name="Perez-Alonso M."/>
            <person name="Boutry M."/>
            <person name="Bancroft I."/>
            <person name="Vos P."/>
            <person name="Hoheisel J."/>
            <person name="Zimmermann W."/>
            <person name="Wedler H."/>
            <person name="Ridley P."/>
            <person name="Langham S.-A."/>
            <person name="McCullagh B."/>
            <person name="Bilham L."/>
            <person name="Robben J."/>
            <person name="van der Schueren J."/>
            <person name="Grymonprez B."/>
            <person name="Chuang Y.-J."/>
            <person name="Vandenbussche F."/>
            <person name="Braeken M."/>
            <person name="Weltjens I."/>
            <person name="Voet M."/>
            <person name="Bastiaens I."/>
            <person name="Aert R."/>
            <person name="Defoor E."/>
            <person name="Weitzenegger T."/>
            <person name="Bothe G."/>
            <person name="Ramsperger U."/>
            <person name="Hilbert H."/>
            <person name="Braun M."/>
            <person name="Holzer E."/>
            <person name="Brandt A."/>
            <person name="Peters S."/>
            <person name="van Staveren M."/>
            <person name="Dirkse W."/>
            <person name="Mooijman P."/>
            <person name="Klein Lankhorst R."/>
            <person name="Rose M."/>
            <person name="Hauf J."/>
            <person name="Koetter P."/>
            <person name="Berneiser S."/>
            <person name="Hempel S."/>
            <person name="Feldpausch M."/>
            <person name="Lamberth S."/>
            <person name="Van den Daele H."/>
            <person name="De Keyser A."/>
            <person name="Buysshaert C."/>
            <person name="Gielen J."/>
            <person name="Villarroel R."/>
            <person name="De Clercq R."/>
            <person name="van Montagu M."/>
            <person name="Rogers J."/>
            <person name="Cronin A."/>
            <person name="Quail M.A."/>
            <person name="Bray-Allen S."/>
            <person name="Clark L."/>
            <person name="Doggett J."/>
            <person name="Hall S."/>
            <person name="Kay M."/>
            <person name="Lennard N."/>
            <person name="McLay K."/>
            <person name="Mayes R."/>
            <person name="Pettett A."/>
            <person name="Rajandream M.A."/>
            <person name="Lyne M."/>
            <person name="Benes V."/>
            <person name="Rechmann S."/>
            <person name="Borkova D."/>
            <person name="Bloecker H."/>
            <person name="Scharfe M."/>
            <person name="Grimm M."/>
            <person name="Loehnert T.-H."/>
            <person name="Dose S."/>
            <person name="de Haan M."/>
            <person name="Maarse A.C."/>
            <person name="Schaefer M."/>
            <person name="Mueller-Auer S."/>
            <person name="Gabel C."/>
            <person name="Fuchs M."/>
            <person name="Fartmann B."/>
            <person name="Granderath K."/>
            <person name="Dauner D."/>
            <person name="Herzl A."/>
            <person name="Neumann S."/>
            <person name="Argiriou A."/>
            <person name="Vitale D."/>
            <person name="Liguori R."/>
            <person name="Piravandi E."/>
            <person name="Massenet O."/>
            <person name="Quigley F."/>
            <person name="Clabauld G."/>
            <person name="Muendlein A."/>
            <person name="Felber R."/>
            <person name="Schnabl S."/>
            <person name="Hiller R."/>
            <person name="Schmidt W."/>
            <person name="Lecharny A."/>
            <person name="Aubourg S."/>
            <person name="Chefdor F."/>
            <person name="Cooke R."/>
            <person name="Berger C."/>
            <person name="Monfort A."/>
            <person name="Casacuberta E."/>
            <person name="Gibbons T."/>
            <person name="Weber N."/>
            <person name="Vandenbol M."/>
            <person name="Bargues M."/>
            <person name="Terol J."/>
            <person name="Torres A."/>
            <person name="Perez-Perez A."/>
            <person name="Purnelle B."/>
            <person name="Bent E."/>
            <person name="Johnson S."/>
            <person name="Tacon D."/>
            <person name="Jesse T."/>
            <person name="Heijnen L."/>
            <person name="Schwarz S."/>
            <person name="Scholler P."/>
            <person name="Heber S."/>
            <person name="Francs P."/>
            <person name="Bielke C."/>
            <person name="Frishman D."/>
            <person name="Haase D."/>
            <person name="Lemcke K."/>
            <person name="Mewes H.-W."/>
            <person name="Stocker S."/>
            <person name="Zaccaria P."/>
            <person name="Bevan M."/>
            <person name="Wilson R.K."/>
            <person name="de la Bastide M."/>
            <person name="Habermann K."/>
            <person name="Parnell L."/>
            <person name="Dedhia N."/>
            <person name="Gnoj L."/>
            <person name="Schutz K."/>
            <person name="Huang E."/>
            <person name="Spiegel L."/>
            <person name="Sekhon M."/>
            <person name="Murray J."/>
            <person name="Sheet P."/>
            <person name="Cordes M."/>
            <person name="Abu-Threideh J."/>
            <person name="Stoneking T."/>
            <person name="Kalicki J."/>
            <person name="Graves T."/>
            <person name="Harmon G."/>
            <person name="Edwards J."/>
            <person name="Latreille P."/>
            <person name="Courtney L."/>
            <person name="Cloud J."/>
            <person name="Abbott A."/>
            <person name="Scott K."/>
            <person name="Johnson D."/>
            <person name="Minx P."/>
            <person name="Bentley D."/>
            <person name="Fulton B."/>
            <person name="Miller N."/>
            <person name="Greco T."/>
            <person name="Kemp K."/>
            <person name="Kramer J."/>
            <person name="Fulton L."/>
            <person name="Mardis E."/>
            <person name="Dante M."/>
            <person name="Pepin K."/>
            <person name="Hillier L.W."/>
            <person name="Nelson J."/>
            <person name="Spieth J."/>
            <person name="Ryan E."/>
            <person name="Andrews S."/>
            <person name="Geisel C."/>
            <person name="Layman D."/>
            <person name="Du H."/>
            <person name="Ali J."/>
            <person name="Berghoff A."/>
            <person name="Jones K."/>
            <person name="Drone K."/>
            <person name="Cotton M."/>
            <person name="Joshu C."/>
            <person name="Antonoiu B."/>
            <person name="Zidanic M."/>
            <person name="Strong C."/>
            <person name="Sun H."/>
            <person name="Lamar B."/>
            <person name="Yordan C."/>
            <person name="Ma P."/>
            <person name="Zhong J."/>
            <person name="Preston R."/>
            <person name="Vil D."/>
            <person name="Shekher M."/>
            <person name="Matero A."/>
            <person name="Shah R."/>
            <person name="Swaby I.K."/>
            <person name="O'Shaughnessy A."/>
            <person name="Rodriguez M."/>
            <person name="Hoffman J."/>
            <person name="Till S."/>
            <person name="Granat S."/>
            <person name="Shohdy N."/>
            <person name="Hasegawa A."/>
            <person name="Hameed A."/>
            <person name="Lodhi M."/>
            <person name="Johnson A."/>
            <person name="Chen E."/>
            <person name="Marra M.A."/>
            <person name="Martienssen R."/>
            <person name="McCombie W.R."/>
        </authorList>
    </citation>
    <scope>NUCLEOTIDE SEQUENCE [LARGE SCALE GENOMIC DNA]</scope>
    <source>
        <strain>cv. Columbia</strain>
    </source>
</reference>
<reference key="2">
    <citation type="journal article" date="2017" name="Plant J.">
        <title>Araport11: a complete reannotation of the Arabidopsis thaliana reference genome.</title>
        <authorList>
            <person name="Cheng C.Y."/>
            <person name="Krishnakumar V."/>
            <person name="Chan A.P."/>
            <person name="Thibaud-Nissen F."/>
            <person name="Schobel S."/>
            <person name="Town C.D."/>
        </authorList>
    </citation>
    <scope>GENOME REANNOTATION</scope>
    <source>
        <strain>cv. Columbia</strain>
    </source>
</reference>
<reference key="3">
    <citation type="journal article" date="2005" name="PLoS Comput. Biol.">
        <title>Inferring hypotheses on functional relationships of genes: Analysis of the Arabidopsis thaliana subtilase gene family.</title>
        <authorList>
            <person name="Rautengarten C."/>
            <person name="Steinhauser D."/>
            <person name="Bussis D."/>
            <person name="Stintzi A."/>
            <person name="Schaller A."/>
            <person name="Kopka J."/>
            <person name="Altmann T."/>
        </authorList>
    </citation>
    <scope>GENE FAMILY</scope>
    <scope>NOMENCLATURE</scope>
</reference>
<keyword id="KW-0068">Autocatalytic cleavage</keyword>
<keyword id="KW-0325">Glycoprotein</keyword>
<keyword id="KW-0378">Hydrolase</keyword>
<keyword id="KW-0645">Protease</keyword>
<keyword id="KW-1185">Reference proteome</keyword>
<keyword id="KW-0964">Secreted</keyword>
<keyword id="KW-0720">Serine protease</keyword>
<keyword id="KW-0732">Signal</keyword>
<keyword id="KW-0865">Zymogen</keyword>
<evidence type="ECO:0000250" key="1">
    <source>
        <dbReference type="UniProtKB" id="Q39547"/>
    </source>
</evidence>
<evidence type="ECO:0000250" key="2">
    <source>
        <dbReference type="UniProtKB" id="Q84WS0"/>
    </source>
</evidence>
<evidence type="ECO:0000255" key="3"/>
<evidence type="ECO:0000255" key="4">
    <source>
        <dbReference type="PROSITE-ProRule" id="PRU00498"/>
    </source>
</evidence>
<evidence type="ECO:0000255" key="5">
    <source>
        <dbReference type="PROSITE-ProRule" id="PRU01240"/>
    </source>
</evidence>
<evidence type="ECO:0000255" key="6">
    <source>
        <dbReference type="PROSITE-ProRule" id="PRU10082"/>
    </source>
</evidence>
<evidence type="ECO:0000303" key="7">
    <source>
    </source>
</evidence>
<evidence type="ECO:0000305" key="8"/>
<evidence type="ECO:0000312" key="9">
    <source>
        <dbReference type="Araport" id="AT4G10530"/>
    </source>
</evidence>
<evidence type="ECO:0000312" key="10">
    <source>
        <dbReference type="EMBL" id="AAD03437.1"/>
    </source>
</evidence>
<evidence type="ECO:0000312" key="11">
    <source>
        <dbReference type="EMBL" id="CAB40046.1"/>
    </source>
</evidence>
<protein>
    <recommendedName>
        <fullName evidence="7">Subtilisin-like protease SBT3.10</fullName>
        <ecNumber evidence="6">3.4.21.-</ecNumber>
    </recommendedName>
    <alternativeName>
        <fullName evidence="7">Subtilase subfamily 3 member 10</fullName>
        <shortName evidence="7">AtSBT3.10</shortName>
    </alternativeName>
</protein>